<dbReference type="EMBL" id="CP000970">
    <property type="protein sequence ID" value="ACB15661.1"/>
    <property type="molecule type" value="Genomic_DNA"/>
</dbReference>
<dbReference type="SMR" id="B1LKV6"/>
<dbReference type="MEROPS" id="I11.001"/>
<dbReference type="KEGG" id="ecm:EcSMS35_2358"/>
<dbReference type="HOGENOM" id="CLU_111565_0_0_6"/>
<dbReference type="Proteomes" id="UP000007011">
    <property type="component" value="Chromosome"/>
</dbReference>
<dbReference type="GO" id="GO:0042597">
    <property type="term" value="C:periplasmic space"/>
    <property type="evidence" value="ECO:0007669"/>
    <property type="project" value="UniProtKB-SubCell"/>
</dbReference>
<dbReference type="GO" id="GO:0004867">
    <property type="term" value="F:serine-type endopeptidase inhibitor activity"/>
    <property type="evidence" value="ECO:0007669"/>
    <property type="project" value="UniProtKB-UniRule"/>
</dbReference>
<dbReference type="CDD" id="cd00242">
    <property type="entry name" value="Ecotin"/>
    <property type="match status" value="1"/>
</dbReference>
<dbReference type="FunFam" id="2.60.40.550:FF:000001">
    <property type="entry name" value="Ecotin"/>
    <property type="match status" value="1"/>
</dbReference>
<dbReference type="FunFam" id="4.10.1230.10:FF:000001">
    <property type="entry name" value="Ecotin"/>
    <property type="match status" value="1"/>
</dbReference>
<dbReference type="Gene3D" id="2.60.40.550">
    <property type="entry name" value="Ecotin"/>
    <property type="match status" value="1"/>
</dbReference>
<dbReference type="Gene3D" id="4.10.1230.10">
    <property type="entry name" value="Ecotin, trypsin inhibitor"/>
    <property type="match status" value="1"/>
</dbReference>
<dbReference type="HAMAP" id="MF_00706">
    <property type="entry name" value="Ecotin"/>
    <property type="match status" value="1"/>
</dbReference>
<dbReference type="InterPro" id="IPR027438">
    <property type="entry name" value="Ecotin_C"/>
</dbReference>
<dbReference type="InterPro" id="IPR036198">
    <property type="entry name" value="Ecotin_sf"/>
</dbReference>
<dbReference type="InterPro" id="IPR005658">
    <property type="entry name" value="Prot_inh_ecotin"/>
</dbReference>
<dbReference type="InterPro" id="IPR023084">
    <property type="entry name" value="Prot_inh_ecotin_gammaproteobac"/>
</dbReference>
<dbReference type="NCBIfam" id="NF002987">
    <property type="entry name" value="PRK03719.1"/>
    <property type="match status" value="1"/>
</dbReference>
<dbReference type="PANTHER" id="PTHR35890">
    <property type="match status" value="1"/>
</dbReference>
<dbReference type="PANTHER" id="PTHR35890:SF3">
    <property type="entry name" value="ECOTIN"/>
    <property type="match status" value="1"/>
</dbReference>
<dbReference type="Pfam" id="PF03974">
    <property type="entry name" value="Ecotin"/>
    <property type="match status" value="1"/>
</dbReference>
<dbReference type="PIRSF" id="PIRSF006865">
    <property type="entry name" value="Prot_inh_ecotin"/>
    <property type="match status" value="1"/>
</dbReference>
<dbReference type="SUPFAM" id="SSF49772">
    <property type="entry name" value="Ecotin, trypsin inhibitor"/>
    <property type="match status" value="1"/>
</dbReference>
<proteinExistence type="inferred from homology"/>
<evidence type="ECO:0000255" key="1">
    <source>
        <dbReference type="HAMAP-Rule" id="MF_00706"/>
    </source>
</evidence>
<keyword id="KW-1015">Disulfide bond</keyword>
<keyword id="KW-0574">Periplasm</keyword>
<keyword id="KW-0646">Protease inhibitor</keyword>
<keyword id="KW-0722">Serine protease inhibitor</keyword>
<keyword id="KW-0732">Signal</keyword>
<gene>
    <name evidence="1" type="primary">eco</name>
    <name type="ordered locus">EcSMS35_2358</name>
</gene>
<sequence>MKTILPAVLFAAFATTSAWAAESVQPLEKIAPYPQAEKGMKRQVIQLTPQEDESTLKVELLIGQTLEVDCNLHRLGGKLESKTLEGWGYDYYVFDKVSSPVSTMMACPDGKKEKKFVTAYLGDAGMLRYNSKLPIVVYTPDNVDVKYRVWKAEEKIDNAVVR</sequence>
<protein>
    <recommendedName>
        <fullName evidence="1">Ecotin</fullName>
    </recommendedName>
</protein>
<organism>
    <name type="scientific">Escherichia coli (strain SMS-3-5 / SECEC)</name>
    <dbReference type="NCBI Taxonomy" id="439855"/>
    <lineage>
        <taxon>Bacteria</taxon>
        <taxon>Pseudomonadati</taxon>
        <taxon>Pseudomonadota</taxon>
        <taxon>Gammaproteobacteria</taxon>
        <taxon>Enterobacterales</taxon>
        <taxon>Enterobacteriaceae</taxon>
        <taxon>Escherichia</taxon>
    </lineage>
</organism>
<comment type="function">
    <text evidence="1">General inhibitor of pancreatic serine proteases: inhibits chymotrypsin, trypsin, elastases, factor X, kallikrein as well as a variety of other proteases.</text>
</comment>
<comment type="subunit">
    <text evidence="1">Homodimer.</text>
</comment>
<comment type="subcellular location">
    <subcellularLocation>
        <location evidence="1">Periplasm</location>
    </subcellularLocation>
</comment>
<comment type="similarity">
    <text evidence="1">Belongs to the protease inhibitor I11 (ecotin) family.</text>
</comment>
<name>ECOT_ECOSM</name>
<accession>B1LKV6</accession>
<feature type="signal peptide" evidence="1">
    <location>
        <begin position="1"/>
        <end position="20"/>
    </location>
</feature>
<feature type="chain" id="PRO_1000132362" description="Ecotin">
    <location>
        <begin position="21"/>
        <end position="162"/>
    </location>
</feature>
<feature type="site" description="Reactive bond" evidence="1">
    <location>
        <begin position="104"/>
        <end position="105"/>
    </location>
</feature>
<feature type="disulfide bond" evidence="1">
    <location>
        <begin position="70"/>
        <end position="107"/>
    </location>
</feature>
<reference key="1">
    <citation type="journal article" date="2008" name="J. Bacteriol.">
        <title>Insights into the environmental resistance gene pool from the genome sequence of the multidrug-resistant environmental isolate Escherichia coli SMS-3-5.</title>
        <authorList>
            <person name="Fricke W.F."/>
            <person name="Wright M.S."/>
            <person name="Lindell A.H."/>
            <person name="Harkins D.M."/>
            <person name="Baker-Austin C."/>
            <person name="Ravel J."/>
            <person name="Stepanauskas R."/>
        </authorList>
    </citation>
    <scope>NUCLEOTIDE SEQUENCE [LARGE SCALE GENOMIC DNA]</scope>
    <source>
        <strain>SMS-3-5 / SECEC</strain>
    </source>
</reference>